<name>CRBB3_BOVIN</name>
<evidence type="ECO:0000250" key="1"/>
<evidence type="ECO:0000250" key="2">
    <source>
        <dbReference type="UniProtKB" id="P02524"/>
    </source>
</evidence>
<evidence type="ECO:0000250" key="3">
    <source>
        <dbReference type="UniProtKB" id="P26998"/>
    </source>
</evidence>
<evidence type="ECO:0000255" key="4">
    <source>
        <dbReference type="PROSITE-ProRule" id="PRU00028"/>
    </source>
</evidence>
<evidence type="ECO:0000269" key="5">
    <source>
    </source>
</evidence>
<evidence type="ECO:0000305" key="6"/>
<reference key="1">
    <citation type="submission" date="1997-08" db="EMBL/GenBank/DDBJ databases">
        <title>Confirmation of bovine beta-B3 crystallin sequence.</title>
        <authorList>
            <person name="Shih M."/>
            <person name="Lampi K.J."/>
            <person name="Shearer T.R."/>
            <person name="David L.L."/>
        </authorList>
    </citation>
    <scope>NUCLEOTIDE SEQUENCE [MRNA]</scope>
</reference>
<reference key="2">
    <citation type="journal article" date="1984" name="Eur. J. Biochem.">
        <title>Homology between the primary structures of the major bovine beta-crystallin chains.</title>
        <authorList>
            <person name="Berbers G.A.M."/>
            <person name="Hoekman W.A."/>
            <person name="Bloemendal H."/>
            <person name="de Jong W.W."/>
            <person name="Kleinschmidt T."/>
            <person name="Braunitzer G."/>
        </authorList>
    </citation>
    <scope>PROTEIN SEQUENCE OF 2-211</scope>
    <source>
        <tissue>Lens cortex</tissue>
    </source>
</reference>
<accession>P19141</accession>
<accession>O18790</accession>
<keyword id="KW-0007">Acetylation</keyword>
<keyword id="KW-0903">Direct protein sequencing</keyword>
<keyword id="KW-0273">Eye lens protein</keyword>
<keyword id="KW-1185">Reference proteome</keyword>
<keyword id="KW-0677">Repeat</keyword>
<proteinExistence type="evidence at protein level"/>
<gene>
    <name type="primary">CRYBB3</name>
</gene>
<protein>
    <recommendedName>
        <fullName>Beta-crystallin B3</fullName>
    </recommendedName>
    <alternativeName>
        <fullName>Beta-B3 crystallin</fullName>
    </alternativeName>
    <component>
        <recommendedName>
            <fullName>Beta-crystallin B3, N-terminally processed</fullName>
        </recommendedName>
    </component>
</protein>
<sequence length="211" mass="24328">MAEQHSTPEQAAAGKSHGGLGGSYKVIVYEMENFQGKRCELTAECPNLTESLLEKVGSIQVESGPWLAFERRAFRGEQYVLEKGDYPRWDAWSNSHHSDSLLSLRPLHIDGPDHKLHLFENPAFGGRKMEIVDDDVPSLWAHGFQDRVASVRAINGTWVGYEFPGYRGRQYVFERGEYRHWNEWDANQPQLQSVRRIRDQKWHKRGVFLSS</sequence>
<dbReference type="EMBL" id="AF013259">
    <property type="protein sequence ID" value="AAB67120.1"/>
    <property type="molecule type" value="mRNA"/>
</dbReference>
<dbReference type="PIR" id="B27898">
    <property type="entry name" value="B27898"/>
</dbReference>
<dbReference type="RefSeq" id="NP_776952.1">
    <property type="nucleotide sequence ID" value="NM_174527.3"/>
</dbReference>
<dbReference type="RefSeq" id="XP_005218081.1">
    <property type="nucleotide sequence ID" value="XM_005218024.5"/>
</dbReference>
<dbReference type="SMR" id="P19141"/>
<dbReference type="FunCoup" id="P19141">
    <property type="interactions" value="41"/>
</dbReference>
<dbReference type="IntAct" id="P19141">
    <property type="interactions" value="1"/>
</dbReference>
<dbReference type="MINT" id="P19141"/>
<dbReference type="STRING" id="9913.ENSBTAP00000001656"/>
<dbReference type="PaxDb" id="9913-ENSBTAP00000001656"/>
<dbReference type="Ensembl" id="ENSBTAT00000001656.5">
    <property type="protein sequence ID" value="ENSBTAP00000001656.3"/>
    <property type="gene ID" value="ENSBTAG00000001255.5"/>
</dbReference>
<dbReference type="GeneID" id="282206"/>
<dbReference type="KEGG" id="bta:282206"/>
<dbReference type="CTD" id="1417"/>
<dbReference type="VEuPathDB" id="HostDB:ENSBTAG00000001255"/>
<dbReference type="VGNC" id="VGNC:27738">
    <property type="gene designation" value="CRYBB3"/>
</dbReference>
<dbReference type="eggNOG" id="ENOG502QTNZ">
    <property type="taxonomic scope" value="Eukaryota"/>
</dbReference>
<dbReference type="GeneTree" id="ENSGT00940000158425"/>
<dbReference type="HOGENOM" id="CLU_081883_0_1_1"/>
<dbReference type="InParanoid" id="P19141"/>
<dbReference type="OMA" id="RIRDRKW"/>
<dbReference type="OrthoDB" id="8701124at2759"/>
<dbReference type="TreeFam" id="TF331401"/>
<dbReference type="Proteomes" id="UP000009136">
    <property type="component" value="Chromosome 17"/>
</dbReference>
<dbReference type="Bgee" id="ENSBTAG00000001255">
    <property type="expression patterns" value="Expressed in anterior segment of eyeball and 19 other cell types or tissues"/>
</dbReference>
<dbReference type="GO" id="GO:0005212">
    <property type="term" value="F:structural constituent of eye lens"/>
    <property type="evidence" value="ECO:0000318"/>
    <property type="project" value="GO_Central"/>
</dbReference>
<dbReference type="GO" id="GO:0002088">
    <property type="term" value="P:lens development in camera-type eye"/>
    <property type="evidence" value="ECO:0000318"/>
    <property type="project" value="GO_Central"/>
</dbReference>
<dbReference type="GO" id="GO:0007601">
    <property type="term" value="P:visual perception"/>
    <property type="evidence" value="ECO:0000318"/>
    <property type="project" value="GO_Central"/>
</dbReference>
<dbReference type="FunFam" id="2.60.20.10:FF:000005">
    <property type="entry name" value="Crystallin, beta B1"/>
    <property type="match status" value="1"/>
</dbReference>
<dbReference type="FunFam" id="2.60.20.10:FF:000002">
    <property type="entry name" value="Crystallin, beta B2"/>
    <property type="match status" value="1"/>
</dbReference>
<dbReference type="Gene3D" id="2.60.20.10">
    <property type="entry name" value="Crystallins"/>
    <property type="match status" value="2"/>
</dbReference>
<dbReference type="InterPro" id="IPR050252">
    <property type="entry name" value="Beta/Gamma-Crystallin"/>
</dbReference>
<dbReference type="InterPro" id="IPR001064">
    <property type="entry name" value="Beta/gamma_crystallin"/>
</dbReference>
<dbReference type="InterPro" id="IPR011024">
    <property type="entry name" value="G_crystallin-like"/>
</dbReference>
<dbReference type="PANTHER" id="PTHR11818:SF13">
    <property type="entry name" value="BETA-CRYSTALLIN B3"/>
    <property type="match status" value="1"/>
</dbReference>
<dbReference type="PANTHER" id="PTHR11818">
    <property type="entry name" value="BETA/GAMMA CRYSTALLIN"/>
    <property type="match status" value="1"/>
</dbReference>
<dbReference type="Pfam" id="PF00030">
    <property type="entry name" value="Crystall"/>
    <property type="match status" value="2"/>
</dbReference>
<dbReference type="PRINTS" id="PR01367">
    <property type="entry name" value="BGCRYSTALLIN"/>
</dbReference>
<dbReference type="SMART" id="SM00247">
    <property type="entry name" value="XTALbg"/>
    <property type="match status" value="2"/>
</dbReference>
<dbReference type="SUPFAM" id="SSF49695">
    <property type="entry name" value="gamma-Crystallin-like"/>
    <property type="match status" value="1"/>
</dbReference>
<dbReference type="PROSITE" id="PS50915">
    <property type="entry name" value="CRYSTALLIN_BETA_GAMMA"/>
    <property type="match status" value="4"/>
</dbReference>
<comment type="function">
    <text>Crystallins are the dominant structural components of the vertebrate eye lens.</text>
</comment>
<comment type="subunit">
    <text evidence="1">Homo/heterodimer, or complexes of higher-order. The structure of beta-crystallin oligomers seems to be stabilized through interactions between the N-terminal arms (By similarity).</text>
</comment>
<comment type="domain">
    <text>Has a two-domain beta-structure, folded into four very similar Greek key motifs.</text>
</comment>
<comment type="similarity">
    <text evidence="6">Belongs to the beta/gamma-crystallin family.</text>
</comment>
<feature type="chain" id="PRO_0000423200" description="Beta-crystallin B3">
    <location>
        <begin position="1"/>
        <end position="211"/>
    </location>
</feature>
<feature type="initiator methionine" description="Removed; alternate" evidence="5">
    <location>
        <position position="1"/>
    </location>
</feature>
<feature type="chain" id="PRO_0000057559" description="Beta-crystallin B3, N-terminally processed">
    <location>
        <begin position="2"/>
        <end position="211"/>
    </location>
</feature>
<feature type="domain" description="Beta/gamma crystallin 'Greek key' 1" evidence="4">
    <location>
        <begin position="24"/>
        <end position="63"/>
    </location>
</feature>
<feature type="domain" description="Beta/gamma crystallin 'Greek key' 2" evidence="4">
    <location>
        <begin position="64"/>
        <end position="108"/>
    </location>
</feature>
<feature type="domain" description="Beta/gamma crystallin 'Greek key' 3" evidence="4">
    <location>
        <begin position="114"/>
        <end position="155"/>
    </location>
</feature>
<feature type="domain" description="Beta/gamma crystallin 'Greek key' 4" evidence="4">
    <location>
        <begin position="156"/>
        <end position="198"/>
    </location>
</feature>
<feature type="region of interest" description="N-terminal arm">
    <location>
        <begin position="2"/>
        <end position="23"/>
    </location>
</feature>
<feature type="region of interest" description="Connecting peptide">
    <location>
        <begin position="109"/>
        <end position="113"/>
    </location>
</feature>
<feature type="region of interest" description="C-terminal arm">
    <location>
        <begin position="200"/>
        <end position="211"/>
    </location>
</feature>
<feature type="modified residue" description="N-acetylmethionine" evidence="3">
    <location>
        <position position="1"/>
    </location>
</feature>
<feature type="modified residue" description="N-acetylalanine; in Beta-crystallin B3, N-terminally processed" evidence="2 6">
    <location>
        <position position="2"/>
    </location>
</feature>
<feature type="sequence conflict" description="In Ref. 2; AA sequence." evidence="6" ref="2">
    <original>G</original>
    <variation>GG</variation>
    <location>
        <position position="22"/>
    </location>
</feature>
<feature type="sequence conflict" description="In Ref. 2; AA sequence." evidence="6" ref="2">
    <original>VI</original>
    <variation>IV</variation>
    <location>
        <begin position="26"/>
        <end position="27"/>
    </location>
</feature>
<feature type="sequence conflict" description="In Ref. 2; AA sequence." evidence="6" ref="2">
    <original>C</original>
    <variation>S</variation>
    <location>
        <position position="39"/>
    </location>
</feature>
<feature type="sequence conflict" description="In Ref. 2; AA sequence." evidence="6" ref="2">
    <original>S</original>
    <variation>A</variation>
    <location>
        <position position="51"/>
    </location>
</feature>
<feature type="sequence conflict" description="In Ref. 2; AA sequence." evidence="6" ref="2">
    <original>R</original>
    <variation>Q</variation>
    <location>
        <position position="71"/>
    </location>
</feature>
<feature type="sequence conflict" description="In Ref. 2; AA sequence." evidence="6" ref="2">
    <original>SN</original>
    <variation>NG</variation>
    <location>
        <begin position="93"/>
        <end position="94"/>
    </location>
</feature>
<feature type="sequence conflict" description="In Ref. 2; AA sequence." evidence="6" ref="2">
    <original>SDSLL</original>
    <variation>QDNLS</variation>
    <location>
        <begin position="98"/>
        <end position="102"/>
    </location>
</feature>
<feature type="sequence conflict" description="In Ref. 2; AA sequence." evidence="6" ref="2">
    <original>LH</original>
    <variation>IK</variation>
    <location>
        <begin position="107"/>
        <end position="108"/>
    </location>
</feature>
<feature type="sequence conflict" description="In Ref. 2; AA sequence." evidence="6" ref="2">
    <original>G</original>
    <variation>GH</variation>
    <location>
        <position position="111"/>
    </location>
</feature>
<feature type="sequence conflict" description="In Ref. 2; AA sequence." evidence="6" ref="2">
    <original>H</original>
    <variation>G</variation>
    <location>
        <position position="117"/>
    </location>
</feature>
<feature type="sequence conflict" description="In Ref. 2; AA sequence." evidence="6" ref="2">
    <original>NPAFG</original>
    <variation>HPNFA</variation>
    <location>
        <begin position="121"/>
        <end position="125"/>
    </location>
</feature>
<feature type="sequence conflict" description="In Ref. 2; AA sequence." evidence="6" ref="2">
    <original>NE</original>
    <variation>DD</variation>
    <location>
        <begin position="182"/>
        <end position="183"/>
    </location>
</feature>
<feature type="sequence conflict" description="In Ref. 2; AA sequence." evidence="6" ref="2">
    <original>N</original>
    <variation>Q</variation>
    <location>
        <position position="187"/>
    </location>
</feature>
<feature type="sequence conflict" description="In Ref. 2; AA sequence." evidence="6" ref="2">
    <original>L</original>
    <variation>LG</variation>
    <location>
        <position position="209"/>
    </location>
</feature>
<organism>
    <name type="scientific">Bos taurus</name>
    <name type="common">Bovine</name>
    <dbReference type="NCBI Taxonomy" id="9913"/>
    <lineage>
        <taxon>Eukaryota</taxon>
        <taxon>Metazoa</taxon>
        <taxon>Chordata</taxon>
        <taxon>Craniata</taxon>
        <taxon>Vertebrata</taxon>
        <taxon>Euteleostomi</taxon>
        <taxon>Mammalia</taxon>
        <taxon>Eutheria</taxon>
        <taxon>Laurasiatheria</taxon>
        <taxon>Artiodactyla</taxon>
        <taxon>Ruminantia</taxon>
        <taxon>Pecora</taxon>
        <taxon>Bovidae</taxon>
        <taxon>Bovinae</taxon>
        <taxon>Bos</taxon>
    </lineage>
</organism>